<keyword id="KW-0028">Amino-acid biosynthesis</keyword>
<keyword id="KW-0963">Cytoplasm</keyword>
<keyword id="KW-0368">Histidine biosynthesis</keyword>
<keyword id="KW-0456">Lyase</keyword>
<keyword id="KW-1185">Reference proteome</keyword>
<feature type="chain" id="PRO_0000142189" description="Imidazole glycerol phosphate synthase subunit HisF">
    <location>
        <begin position="1"/>
        <end position="258"/>
    </location>
</feature>
<feature type="active site" evidence="1">
    <location>
        <position position="11"/>
    </location>
</feature>
<feature type="active site" evidence="1">
    <location>
        <position position="130"/>
    </location>
</feature>
<accession>Q3SWF1</accession>
<sequence length="258" mass="27791">MFKVRVIPCLDVKDGRVVKGVNFVDLRDAGDPVEAAIAYDAAGADELTFLDITATHENRGIMLDVVRRTAEACFMPVTVGGGVRTIEDIRTLLRSGADKVSINSAAVSRREFVKEASEKFGDQCIVVAIDAKRVSRTGGTDRWEIFTHGGRRSTGIDAIEYAQEVASLGAGEILLTSMDRDGTRQGFDLPLTRRVADSVPVPVIASGGVGNLDHLVDGIREGHATAVLAASIFHFGEFTIRQAKEHMVRAGLAMRLDP</sequence>
<name>HIS6_NITWN</name>
<protein>
    <recommendedName>
        <fullName evidence="1">Imidazole glycerol phosphate synthase subunit HisF</fullName>
        <ecNumber evidence="1">4.3.2.10</ecNumber>
    </recommendedName>
    <alternativeName>
        <fullName evidence="1">IGP synthase cyclase subunit</fullName>
    </alternativeName>
    <alternativeName>
        <fullName evidence="1">IGP synthase subunit HisF</fullName>
    </alternativeName>
    <alternativeName>
        <fullName evidence="1">ImGP synthase subunit HisF</fullName>
        <shortName evidence="1">IGPS subunit HisF</shortName>
    </alternativeName>
</protein>
<gene>
    <name evidence="1" type="primary">hisF</name>
    <name type="ordered locus">Nwi_0122</name>
</gene>
<comment type="function">
    <text evidence="1">IGPS catalyzes the conversion of PRFAR and glutamine to IGP, AICAR and glutamate. The HisF subunit catalyzes the cyclization activity that produces IGP and AICAR from PRFAR using the ammonia provided by the HisH subunit.</text>
</comment>
<comment type="catalytic activity">
    <reaction evidence="1">
        <text>5-[(5-phospho-1-deoxy-D-ribulos-1-ylimino)methylamino]-1-(5-phospho-beta-D-ribosyl)imidazole-4-carboxamide + L-glutamine = D-erythro-1-(imidazol-4-yl)glycerol 3-phosphate + 5-amino-1-(5-phospho-beta-D-ribosyl)imidazole-4-carboxamide + L-glutamate + H(+)</text>
        <dbReference type="Rhea" id="RHEA:24793"/>
        <dbReference type="ChEBI" id="CHEBI:15378"/>
        <dbReference type="ChEBI" id="CHEBI:29985"/>
        <dbReference type="ChEBI" id="CHEBI:58278"/>
        <dbReference type="ChEBI" id="CHEBI:58359"/>
        <dbReference type="ChEBI" id="CHEBI:58475"/>
        <dbReference type="ChEBI" id="CHEBI:58525"/>
        <dbReference type="EC" id="4.3.2.10"/>
    </reaction>
</comment>
<comment type="pathway">
    <text evidence="1">Amino-acid biosynthesis; L-histidine biosynthesis; L-histidine from 5-phospho-alpha-D-ribose 1-diphosphate: step 5/9.</text>
</comment>
<comment type="subunit">
    <text evidence="1">Heterodimer of HisH and HisF.</text>
</comment>
<comment type="subcellular location">
    <subcellularLocation>
        <location evidence="1">Cytoplasm</location>
    </subcellularLocation>
</comment>
<comment type="similarity">
    <text evidence="1">Belongs to the HisA/HisF family.</text>
</comment>
<reference key="1">
    <citation type="journal article" date="2006" name="Appl. Environ. Microbiol.">
        <title>Genome sequence of the chemolithoautotrophic nitrite-oxidizing bacterium Nitrobacter winogradskyi Nb-255.</title>
        <authorList>
            <person name="Starkenburg S.R."/>
            <person name="Chain P.S.G."/>
            <person name="Sayavedra-Soto L.A."/>
            <person name="Hauser L."/>
            <person name="Land M.L."/>
            <person name="Larimer F.W."/>
            <person name="Malfatti S.A."/>
            <person name="Klotz M.G."/>
            <person name="Bottomley P.J."/>
            <person name="Arp D.J."/>
            <person name="Hickey W.J."/>
        </authorList>
    </citation>
    <scope>NUCLEOTIDE SEQUENCE [LARGE SCALE GENOMIC DNA]</scope>
    <source>
        <strain>ATCC 25391 / DSM 10237 / CIP 104748 / NCIMB 11846 / Nb-255</strain>
    </source>
</reference>
<organism>
    <name type="scientific">Nitrobacter winogradskyi (strain ATCC 25391 / DSM 10237 / CIP 104748 / NCIMB 11846 / Nb-255)</name>
    <dbReference type="NCBI Taxonomy" id="323098"/>
    <lineage>
        <taxon>Bacteria</taxon>
        <taxon>Pseudomonadati</taxon>
        <taxon>Pseudomonadota</taxon>
        <taxon>Alphaproteobacteria</taxon>
        <taxon>Hyphomicrobiales</taxon>
        <taxon>Nitrobacteraceae</taxon>
        <taxon>Nitrobacter</taxon>
    </lineage>
</organism>
<proteinExistence type="inferred from homology"/>
<dbReference type="EC" id="4.3.2.10" evidence="1"/>
<dbReference type="EMBL" id="CP000115">
    <property type="protein sequence ID" value="ABA03390.1"/>
    <property type="molecule type" value="Genomic_DNA"/>
</dbReference>
<dbReference type="RefSeq" id="WP_011313459.1">
    <property type="nucleotide sequence ID" value="NC_007406.1"/>
</dbReference>
<dbReference type="SMR" id="Q3SWF1"/>
<dbReference type="STRING" id="323098.Nwi_0122"/>
<dbReference type="KEGG" id="nwi:Nwi_0122"/>
<dbReference type="eggNOG" id="COG0107">
    <property type="taxonomic scope" value="Bacteria"/>
</dbReference>
<dbReference type="HOGENOM" id="CLU_048577_4_0_5"/>
<dbReference type="OrthoDB" id="9781903at2"/>
<dbReference type="UniPathway" id="UPA00031">
    <property type="reaction ID" value="UER00010"/>
</dbReference>
<dbReference type="Proteomes" id="UP000002531">
    <property type="component" value="Chromosome"/>
</dbReference>
<dbReference type="GO" id="GO:0005737">
    <property type="term" value="C:cytoplasm"/>
    <property type="evidence" value="ECO:0007669"/>
    <property type="project" value="UniProtKB-SubCell"/>
</dbReference>
<dbReference type="GO" id="GO:0000107">
    <property type="term" value="F:imidazoleglycerol-phosphate synthase activity"/>
    <property type="evidence" value="ECO:0007669"/>
    <property type="project" value="UniProtKB-UniRule"/>
</dbReference>
<dbReference type="GO" id="GO:0016829">
    <property type="term" value="F:lyase activity"/>
    <property type="evidence" value="ECO:0007669"/>
    <property type="project" value="UniProtKB-KW"/>
</dbReference>
<dbReference type="GO" id="GO:0000105">
    <property type="term" value="P:L-histidine biosynthetic process"/>
    <property type="evidence" value="ECO:0007669"/>
    <property type="project" value="UniProtKB-UniRule"/>
</dbReference>
<dbReference type="CDD" id="cd04731">
    <property type="entry name" value="HisF"/>
    <property type="match status" value="1"/>
</dbReference>
<dbReference type="FunFam" id="3.20.20.70:FF:000006">
    <property type="entry name" value="Imidazole glycerol phosphate synthase subunit HisF"/>
    <property type="match status" value="1"/>
</dbReference>
<dbReference type="Gene3D" id="3.20.20.70">
    <property type="entry name" value="Aldolase class I"/>
    <property type="match status" value="1"/>
</dbReference>
<dbReference type="HAMAP" id="MF_01013">
    <property type="entry name" value="HisF"/>
    <property type="match status" value="1"/>
</dbReference>
<dbReference type="InterPro" id="IPR013785">
    <property type="entry name" value="Aldolase_TIM"/>
</dbReference>
<dbReference type="InterPro" id="IPR006062">
    <property type="entry name" value="His_biosynth"/>
</dbReference>
<dbReference type="InterPro" id="IPR004651">
    <property type="entry name" value="HisF"/>
</dbReference>
<dbReference type="InterPro" id="IPR050064">
    <property type="entry name" value="IGPS_HisA/HisF"/>
</dbReference>
<dbReference type="InterPro" id="IPR011060">
    <property type="entry name" value="RibuloseP-bd_barrel"/>
</dbReference>
<dbReference type="NCBIfam" id="TIGR00735">
    <property type="entry name" value="hisF"/>
    <property type="match status" value="1"/>
</dbReference>
<dbReference type="PANTHER" id="PTHR21235:SF2">
    <property type="entry name" value="IMIDAZOLE GLYCEROL PHOSPHATE SYNTHASE HISHF"/>
    <property type="match status" value="1"/>
</dbReference>
<dbReference type="PANTHER" id="PTHR21235">
    <property type="entry name" value="IMIDAZOLE GLYCEROL PHOSPHATE SYNTHASE SUBUNIT HISF/H IGP SYNTHASE SUBUNIT HISF/H"/>
    <property type="match status" value="1"/>
</dbReference>
<dbReference type="Pfam" id="PF00977">
    <property type="entry name" value="His_biosynth"/>
    <property type="match status" value="1"/>
</dbReference>
<dbReference type="SUPFAM" id="SSF51366">
    <property type="entry name" value="Ribulose-phoshate binding barrel"/>
    <property type="match status" value="1"/>
</dbReference>
<evidence type="ECO:0000255" key="1">
    <source>
        <dbReference type="HAMAP-Rule" id="MF_01013"/>
    </source>
</evidence>